<name>FTSH_HELAN</name>
<organism>
    <name type="scientific">Helianthus annuus</name>
    <name type="common">Common sunflower</name>
    <dbReference type="NCBI Taxonomy" id="4232"/>
    <lineage>
        <taxon>Eukaryota</taxon>
        <taxon>Viridiplantae</taxon>
        <taxon>Streptophyta</taxon>
        <taxon>Embryophyta</taxon>
        <taxon>Tracheophyta</taxon>
        <taxon>Spermatophyta</taxon>
        <taxon>Magnoliopsida</taxon>
        <taxon>eudicotyledons</taxon>
        <taxon>Gunneridae</taxon>
        <taxon>Pentapetalae</taxon>
        <taxon>asterids</taxon>
        <taxon>campanulids</taxon>
        <taxon>Asterales</taxon>
        <taxon>Asteraceae</taxon>
        <taxon>Asteroideae</taxon>
        <taxon>Heliantheae alliance</taxon>
        <taxon>Heliantheae</taxon>
        <taxon>Helianthus</taxon>
    </lineage>
</organism>
<feature type="chain" id="PRO_0000397225" description="ATP-dependent zinc metalloprotease FTSH, chloroplastic">
    <location>
        <begin position="1" status="less than"/>
        <end position="260" status="greater than"/>
    </location>
</feature>
<feature type="active site" evidence="1">
    <location>
        <position position="220"/>
    </location>
</feature>
<feature type="binding site" evidence="1">
    <location>
        <position position="219"/>
    </location>
    <ligand>
        <name>Zn(2+)</name>
        <dbReference type="ChEBI" id="CHEBI:29105"/>
        <note>catalytic</note>
    </ligand>
</feature>
<feature type="binding site" evidence="1">
    <location>
        <position position="223"/>
    </location>
    <ligand>
        <name>Zn(2+)</name>
        <dbReference type="ChEBI" id="CHEBI:29105"/>
        <note>catalytic</note>
    </ligand>
</feature>
<feature type="non-terminal residue" evidence="5">
    <location>
        <position position="1"/>
    </location>
</feature>
<feature type="non-terminal residue" evidence="5">
    <location>
        <position position="260"/>
    </location>
</feature>
<dbReference type="EC" id="3.4.24.-"/>
<dbReference type="EMBL" id="BQ969737">
    <property type="status" value="NOT_ANNOTATED_CDS"/>
    <property type="molecule type" value="mRNA"/>
</dbReference>
<dbReference type="SMR" id="P85190"/>
<dbReference type="GO" id="GO:0009535">
    <property type="term" value="C:chloroplast thylakoid membrane"/>
    <property type="evidence" value="ECO:0007669"/>
    <property type="project" value="UniProtKB-SubCell"/>
</dbReference>
<dbReference type="GO" id="GO:0005524">
    <property type="term" value="F:ATP binding"/>
    <property type="evidence" value="ECO:0007669"/>
    <property type="project" value="UniProtKB-KW"/>
</dbReference>
<dbReference type="GO" id="GO:0016887">
    <property type="term" value="F:ATP hydrolysis activity"/>
    <property type="evidence" value="ECO:0007669"/>
    <property type="project" value="InterPro"/>
</dbReference>
<dbReference type="GO" id="GO:0004176">
    <property type="term" value="F:ATP-dependent peptidase activity"/>
    <property type="evidence" value="ECO:0007669"/>
    <property type="project" value="InterPro"/>
</dbReference>
<dbReference type="GO" id="GO:0046872">
    <property type="term" value="F:metal ion binding"/>
    <property type="evidence" value="ECO:0007669"/>
    <property type="project" value="UniProtKB-KW"/>
</dbReference>
<dbReference type="GO" id="GO:0004222">
    <property type="term" value="F:metalloendopeptidase activity"/>
    <property type="evidence" value="ECO:0007669"/>
    <property type="project" value="InterPro"/>
</dbReference>
<dbReference type="GO" id="GO:0006508">
    <property type="term" value="P:proteolysis"/>
    <property type="evidence" value="ECO:0007669"/>
    <property type="project" value="UniProtKB-KW"/>
</dbReference>
<dbReference type="FunFam" id="1.10.8.60:FF:000001">
    <property type="entry name" value="ATP-dependent zinc metalloprotease FtsH"/>
    <property type="match status" value="1"/>
</dbReference>
<dbReference type="Gene3D" id="1.10.8.60">
    <property type="match status" value="1"/>
</dbReference>
<dbReference type="Gene3D" id="3.40.50.300">
    <property type="entry name" value="P-loop containing nucleotide triphosphate hydrolases"/>
    <property type="match status" value="1"/>
</dbReference>
<dbReference type="Gene3D" id="1.20.58.760">
    <property type="entry name" value="Peptidase M41"/>
    <property type="match status" value="1"/>
</dbReference>
<dbReference type="InterPro" id="IPR041569">
    <property type="entry name" value="AAA_lid_3"/>
</dbReference>
<dbReference type="InterPro" id="IPR003959">
    <property type="entry name" value="ATPase_AAA_core"/>
</dbReference>
<dbReference type="InterPro" id="IPR003960">
    <property type="entry name" value="ATPase_AAA_CS"/>
</dbReference>
<dbReference type="InterPro" id="IPR027417">
    <property type="entry name" value="P-loop_NTPase"/>
</dbReference>
<dbReference type="InterPro" id="IPR000642">
    <property type="entry name" value="Peptidase_M41"/>
</dbReference>
<dbReference type="InterPro" id="IPR037219">
    <property type="entry name" value="Peptidase_M41-like"/>
</dbReference>
<dbReference type="PANTHER" id="PTHR23076:SF49">
    <property type="entry name" value="ATP-DEPENDENT ZINC METALLOPROTEASE FTSH 7, CHLOROPLASTIC"/>
    <property type="match status" value="1"/>
</dbReference>
<dbReference type="PANTHER" id="PTHR23076">
    <property type="entry name" value="METALLOPROTEASE M41 FTSH"/>
    <property type="match status" value="1"/>
</dbReference>
<dbReference type="Pfam" id="PF00004">
    <property type="entry name" value="AAA"/>
    <property type="match status" value="1"/>
</dbReference>
<dbReference type="Pfam" id="PF17862">
    <property type="entry name" value="AAA_lid_3"/>
    <property type="match status" value="1"/>
</dbReference>
<dbReference type="Pfam" id="PF01434">
    <property type="entry name" value="Peptidase_M41"/>
    <property type="match status" value="1"/>
</dbReference>
<dbReference type="SUPFAM" id="SSF140990">
    <property type="entry name" value="FtsH protease domain-like"/>
    <property type="match status" value="1"/>
</dbReference>
<dbReference type="SUPFAM" id="SSF52540">
    <property type="entry name" value="P-loop containing nucleoside triphosphate hydrolases"/>
    <property type="match status" value="1"/>
</dbReference>
<dbReference type="PROSITE" id="PS00674">
    <property type="entry name" value="AAA"/>
    <property type="match status" value="1"/>
</dbReference>
<comment type="function">
    <text evidence="1">Probable ATP-dependent zinc metallopeptidase.</text>
</comment>
<comment type="cofactor">
    <cofactor evidence="1">
        <name>Zn(2+)</name>
        <dbReference type="ChEBI" id="CHEBI:29105"/>
    </cofactor>
    <text evidence="1">Binds 1 zinc ion per subunit.</text>
</comment>
<comment type="subcellular location">
    <subcellularLocation>
        <location evidence="1">Plastid</location>
        <location evidence="1">Chloroplast thylakoid membrane</location>
        <topology evidence="1">Single-pass membrane protein</topology>
        <orientation evidence="1">Stromal side</orientation>
    </subcellularLocation>
</comment>
<comment type="induction">
    <text evidence="4">Down-regulated in response to zinc ion contamination and in response to mixed metal ion contamination (cadmium, copper, lead and zinc).</text>
</comment>
<comment type="similarity">
    <text evidence="2">In the N-terminal section; belongs to the AAA ATPase family.</text>
</comment>
<comment type="similarity">
    <text evidence="2">In the C-terminal section; belongs to the peptidase M41 family.</text>
</comment>
<proteinExistence type="evidence at protein level"/>
<evidence type="ECO:0000250" key="1">
    <source>
        <dbReference type="UniProtKB" id="Q9FIM2"/>
    </source>
</evidence>
<evidence type="ECO:0000255" key="2"/>
<evidence type="ECO:0000269" key="3">
    <source ref="1"/>
</evidence>
<evidence type="ECO:0000269" key="4">
    <source ref="2"/>
</evidence>
<evidence type="ECO:0000305" key="5"/>
<protein>
    <recommendedName>
        <fullName>ATP-dependent zinc metalloprotease FTSH, chloroplastic</fullName>
        <ecNumber>3.4.24.-</ecNumber>
    </recommendedName>
</protein>
<keyword id="KW-0067">ATP-binding</keyword>
<keyword id="KW-0150">Chloroplast</keyword>
<keyword id="KW-0378">Hydrolase</keyword>
<keyword id="KW-0472">Membrane</keyword>
<keyword id="KW-0479">Metal-binding</keyword>
<keyword id="KW-0482">Metalloprotease</keyword>
<keyword id="KW-0547">Nucleotide-binding</keyword>
<keyword id="KW-0934">Plastid</keyword>
<keyword id="KW-0645">Protease</keyword>
<keyword id="KW-0793">Thylakoid</keyword>
<keyword id="KW-0862">Zinc</keyword>
<sequence>NSALWPVAGEAEVPFISCSASEFVELYVGMGASRVRDLFARAKKEAPSIIFIDEIDAVAKSRDGRFRIVSNDEREQTLNQLLTEMDGFDSNSAVIVLGATNRADVLDPALRRPGRFDRVVMVETPDRVGRQAILNVHVSKKELPLGDDVDLASIASMTTGFTGADLANLVNEAALLAGRQNKVVVEKIDFIHAVERSIAGIEKKTAKLQGSEKAVVARHEAGHAVVGTAVSKLLAGQPRVEKLSILPRSGRALGFTYTPS</sequence>
<reference evidence="5" key="1">
    <citation type="submission" date="2002-08" db="EMBL/GenBank/DDBJ databases">
        <title>Lettuce and sunflower ESTs from the compositae genome project http://compgenomics.ucdavis.edu/.</title>
        <authorList>
            <person name="Kozik A."/>
            <person name="Michelmore R.W."/>
            <person name="Knapp S."/>
            <person name="Matvienko M."/>
            <person name="Rieseberg L."/>
            <person name="Lin H."/>
            <person name="van Damme M."/>
            <person name="Lavelle D."/>
            <person name="Chevalier P."/>
            <person name="Ziegle J."/>
            <person name="Ellison P."/>
            <person name="Kolkman J."/>
            <person name="Slabaugh M.S."/>
            <person name="Livingston K."/>
            <person name="Zhou Y."/>
            <person name="Lai Z."/>
            <person name="Church S."/>
            <person name="Jackson L."/>
            <person name="Bradford K."/>
        </authorList>
    </citation>
    <scope>NUCLEOTIDE SEQUENCE [LARGE SCALE MRNA]</scope>
    <source>
        <strain evidence="3">cv. RHA801</strain>
    </source>
</reference>
<reference evidence="5" key="2">
    <citation type="journal article" date="2009" name="Metallomics">
        <title>Evaluation of metal-ion stress in sunflower (Heliantus annus L.) leaves through proteomic changes.</title>
        <authorList>
            <person name="Garcia J.S."/>
            <person name="Souza G.H.M.F."/>
            <person name="Eberlin M.N."/>
            <person name="Arruda M.A.Z."/>
        </authorList>
    </citation>
    <scope>IDENTIFICATION BY MASS SPECTROMETRY</scope>
    <scope>INDUCTION</scope>
</reference>
<gene>
    <name evidence="1" type="primary">FTSH</name>
</gene>
<accession>P85190</accession>